<dbReference type="EMBL" id="U58883">
    <property type="protein sequence ID" value="AAC71776.1"/>
    <property type="molecule type" value="mRNA"/>
</dbReference>
<dbReference type="EMBL" id="AF078666">
    <property type="protein sequence ID" value="AAD16007.1"/>
    <property type="molecule type" value="mRNA"/>
</dbReference>
<dbReference type="EMBL" id="AF078667">
    <property type="protein sequence ID" value="AAD16008.1"/>
    <property type="molecule type" value="mRNA"/>
</dbReference>
<dbReference type="EMBL" id="AF521593">
    <property type="protein sequence ID" value="AAM77354.1"/>
    <property type="molecule type" value="mRNA"/>
</dbReference>
<dbReference type="EMBL" id="AK122487">
    <property type="protein sequence ID" value="BAC65769.2"/>
    <property type="status" value="ALT_INIT"/>
    <property type="molecule type" value="mRNA"/>
</dbReference>
<dbReference type="EMBL" id="AK035212">
    <property type="protein sequence ID" value="BAC28980.1"/>
    <property type="molecule type" value="mRNA"/>
</dbReference>
<dbReference type="EMBL" id="BC012703">
    <property type="protein sequence ID" value="AAH12703.1"/>
    <property type="molecule type" value="mRNA"/>
</dbReference>
<dbReference type="CCDS" id="CCDS37978.1">
    <molecule id="Q62417-3"/>
</dbReference>
<dbReference type="CCDS" id="CCDS37979.1">
    <molecule id="Q62417-2"/>
</dbReference>
<dbReference type="CCDS" id="CCDS37981.1">
    <molecule id="Q62417-4"/>
</dbReference>
<dbReference type="CCDS" id="CCDS89388.1">
    <molecule id="Q62417-5"/>
</dbReference>
<dbReference type="RefSeq" id="NP_001030134.1">
    <property type="nucleotide sequence ID" value="NM_001034962.1"/>
</dbReference>
<dbReference type="RefSeq" id="NP_001030135.1">
    <property type="nucleotide sequence ID" value="NM_001034963.1"/>
</dbReference>
<dbReference type="RefSeq" id="NP_001030136.1">
    <property type="nucleotide sequence ID" value="NM_001034964.1"/>
</dbReference>
<dbReference type="SMR" id="Q62417"/>
<dbReference type="BioGRID" id="203213">
    <property type="interactions" value="47"/>
</dbReference>
<dbReference type="FunCoup" id="Q62417">
    <property type="interactions" value="373"/>
</dbReference>
<dbReference type="IntAct" id="Q62417">
    <property type="interactions" value="13"/>
</dbReference>
<dbReference type="MINT" id="Q62417"/>
<dbReference type="GlyGen" id="Q62417">
    <property type="glycosylation" value="9 sites, 1 N-linked glycan (1 site), 1 O-linked glycan (5 sites)"/>
</dbReference>
<dbReference type="iPTMnet" id="Q62417"/>
<dbReference type="PhosphoSitePlus" id="Q62417"/>
<dbReference type="SwissPalm" id="Q62417"/>
<dbReference type="jPOST" id="Q62417"/>
<dbReference type="PeptideAtlas" id="Q62417"/>
<dbReference type="ProteomicsDB" id="262681">
    <molecule id="Q62417-1"/>
</dbReference>
<dbReference type="ProteomicsDB" id="262682">
    <molecule id="Q62417-2"/>
</dbReference>
<dbReference type="ProteomicsDB" id="262683">
    <molecule id="Q62417-3"/>
</dbReference>
<dbReference type="ProteomicsDB" id="262684">
    <molecule id="Q62417-4"/>
</dbReference>
<dbReference type="ProteomicsDB" id="262685">
    <molecule id="Q62417-5"/>
</dbReference>
<dbReference type="ProteomicsDB" id="262686">
    <molecule id="Q62417-6"/>
</dbReference>
<dbReference type="ProteomicsDB" id="262687">
    <molecule id="Q62417-7"/>
</dbReference>
<dbReference type="Pumba" id="Q62417"/>
<dbReference type="DNASU" id="20411"/>
<dbReference type="GeneID" id="20411"/>
<dbReference type="KEGG" id="mmu:20411"/>
<dbReference type="UCSC" id="uc008hkr.1">
    <molecule id="Q62417-1"/>
    <property type="organism name" value="mouse"/>
</dbReference>
<dbReference type="UCSC" id="uc008hks.1">
    <molecule id="Q62417-6"/>
    <property type="organism name" value="mouse"/>
</dbReference>
<dbReference type="UCSC" id="uc008hkt.1">
    <molecule id="Q62417-7"/>
    <property type="organism name" value="mouse"/>
</dbReference>
<dbReference type="AGR" id="MGI:700014"/>
<dbReference type="CTD" id="10580"/>
<dbReference type="MGI" id="MGI:700014">
    <property type="gene designation" value="Sorbs1"/>
</dbReference>
<dbReference type="eggNOG" id="KOG4225">
    <property type="taxonomic scope" value="Eukaryota"/>
</dbReference>
<dbReference type="InParanoid" id="Q62417"/>
<dbReference type="PhylomeDB" id="Q62417"/>
<dbReference type="Reactome" id="R-MMU-445355">
    <property type="pathway name" value="Smooth Muscle Contraction"/>
</dbReference>
<dbReference type="BioGRID-ORCS" id="20411">
    <property type="hits" value="0 hits in 78 CRISPR screens"/>
</dbReference>
<dbReference type="CD-CODE" id="CE726F99">
    <property type="entry name" value="Postsynaptic density"/>
</dbReference>
<dbReference type="ChiTaRS" id="Sorbs1">
    <property type="organism name" value="mouse"/>
</dbReference>
<dbReference type="PRO" id="PR:Q62417"/>
<dbReference type="Proteomes" id="UP000000589">
    <property type="component" value="Unplaced"/>
</dbReference>
<dbReference type="RNAct" id="Q62417">
    <property type="molecule type" value="protein"/>
</dbReference>
<dbReference type="GO" id="GO:0005912">
    <property type="term" value="C:adherens junction"/>
    <property type="evidence" value="ECO:0000314"/>
    <property type="project" value="UniProtKB"/>
</dbReference>
<dbReference type="GO" id="GO:0030055">
    <property type="term" value="C:cell-substrate junction"/>
    <property type="evidence" value="ECO:0000314"/>
    <property type="project" value="UniProtKB"/>
</dbReference>
<dbReference type="GO" id="GO:0005856">
    <property type="term" value="C:cytoskeleton"/>
    <property type="evidence" value="ECO:0000314"/>
    <property type="project" value="UniProtKB"/>
</dbReference>
<dbReference type="GO" id="GO:0005829">
    <property type="term" value="C:cytosol"/>
    <property type="evidence" value="ECO:0000314"/>
    <property type="project" value="BHF-UCL"/>
</dbReference>
<dbReference type="GO" id="GO:0016600">
    <property type="term" value="C:flotillin complex"/>
    <property type="evidence" value="ECO:0000314"/>
    <property type="project" value="BHF-UCL"/>
</dbReference>
<dbReference type="GO" id="GO:0005925">
    <property type="term" value="C:focal adhesion"/>
    <property type="evidence" value="ECO:0007669"/>
    <property type="project" value="UniProtKB-SubCell"/>
</dbReference>
<dbReference type="GO" id="GO:0016020">
    <property type="term" value="C:membrane"/>
    <property type="evidence" value="ECO:0000314"/>
    <property type="project" value="BHF-UCL"/>
</dbReference>
<dbReference type="GO" id="GO:0045121">
    <property type="term" value="C:membrane raft"/>
    <property type="evidence" value="ECO:0000314"/>
    <property type="project" value="UniProtKB"/>
</dbReference>
<dbReference type="GO" id="GO:0016363">
    <property type="term" value="C:nuclear matrix"/>
    <property type="evidence" value="ECO:0000314"/>
    <property type="project" value="UniProtKB"/>
</dbReference>
<dbReference type="GO" id="GO:0005634">
    <property type="term" value="C:nucleus"/>
    <property type="evidence" value="ECO:0000314"/>
    <property type="project" value="UniProtKB"/>
</dbReference>
<dbReference type="GO" id="GO:0001725">
    <property type="term" value="C:stress fiber"/>
    <property type="evidence" value="ECO:0000314"/>
    <property type="project" value="UniProtKB"/>
</dbReference>
<dbReference type="GO" id="GO:0045202">
    <property type="term" value="C:synapse"/>
    <property type="evidence" value="ECO:0000314"/>
    <property type="project" value="MGI"/>
</dbReference>
<dbReference type="GO" id="GO:0005158">
    <property type="term" value="F:insulin receptor binding"/>
    <property type="evidence" value="ECO:0000314"/>
    <property type="project" value="UniProtKB"/>
</dbReference>
<dbReference type="GO" id="GO:0019901">
    <property type="term" value="F:protein kinase binding"/>
    <property type="evidence" value="ECO:0000314"/>
    <property type="project" value="MGI"/>
</dbReference>
<dbReference type="GO" id="GO:0030159">
    <property type="term" value="F:signaling receptor complex adaptor activity"/>
    <property type="evidence" value="ECO:0000353"/>
    <property type="project" value="BHF-UCL"/>
</dbReference>
<dbReference type="GO" id="GO:0031625">
    <property type="term" value="F:ubiquitin protein ligase binding"/>
    <property type="evidence" value="ECO:0000353"/>
    <property type="project" value="BHF-UCL"/>
</dbReference>
<dbReference type="GO" id="GO:0095500">
    <property type="term" value="P:acetylcholine receptor signaling pathway"/>
    <property type="evidence" value="ECO:0000316"/>
    <property type="project" value="MGI"/>
</dbReference>
<dbReference type="GO" id="GO:0032869">
    <property type="term" value="P:cellular response to insulin stimulus"/>
    <property type="evidence" value="ECO:0000315"/>
    <property type="project" value="BHF-UCL"/>
</dbReference>
<dbReference type="GO" id="GO:0048041">
    <property type="term" value="P:focal adhesion assembly"/>
    <property type="evidence" value="ECO:0000314"/>
    <property type="project" value="UniProtKB"/>
</dbReference>
<dbReference type="GO" id="GO:0008286">
    <property type="term" value="P:insulin receptor signaling pathway"/>
    <property type="evidence" value="ECO:0000314"/>
    <property type="project" value="UniProtKB"/>
</dbReference>
<dbReference type="GO" id="GO:0046326">
    <property type="term" value="P:positive regulation of D-glucose import"/>
    <property type="evidence" value="ECO:0000314"/>
    <property type="project" value="UniProtKB"/>
</dbReference>
<dbReference type="GO" id="GO:0045725">
    <property type="term" value="P:positive regulation of glycogen biosynthetic process"/>
    <property type="evidence" value="ECO:0000315"/>
    <property type="project" value="BHF-UCL"/>
</dbReference>
<dbReference type="GO" id="GO:0046628">
    <property type="term" value="P:positive regulation of insulin receptor signaling pathway"/>
    <property type="evidence" value="ECO:0000314"/>
    <property type="project" value="UniProtKB"/>
</dbReference>
<dbReference type="GO" id="GO:0046889">
    <property type="term" value="P:positive regulation of lipid biosynthetic process"/>
    <property type="evidence" value="ECO:0000315"/>
    <property type="project" value="BHF-UCL"/>
</dbReference>
<dbReference type="GO" id="GO:1903078">
    <property type="term" value="P:positive regulation of protein localization to plasma membrane"/>
    <property type="evidence" value="ECO:0000315"/>
    <property type="project" value="BHF-UCL"/>
</dbReference>
<dbReference type="GO" id="GO:1904393">
    <property type="term" value="P:regulation of skeletal muscle acetylcholine-gated channel clustering"/>
    <property type="evidence" value="ECO:0000316"/>
    <property type="project" value="MGI"/>
</dbReference>
<dbReference type="GO" id="GO:0043149">
    <property type="term" value="P:stress fiber assembly"/>
    <property type="evidence" value="ECO:0000314"/>
    <property type="project" value="UniProtKB"/>
</dbReference>
<dbReference type="CDD" id="cd11919">
    <property type="entry name" value="SH3_Sorbs1_1"/>
    <property type="match status" value="1"/>
</dbReference>
<dbReference type="CDD" id="cd11922">
    <property type="entry name" value="SH3_Sorbs1_2"/>
    <property type="match status" value="1"/>
</dbReference>
<dbReference type="CDD" id="cd11916">
    <property type="entry name" value="SH3_Sorbs1_3"/>
    <property type="match status" value="1"/>
</dbReference>
<dbReference type="FunFam" id="2.30.30.40:FF:000001">
    <property type="entry name" value="Sorbin and SH3 domain-containing protein 1 isoform 2"/>
    <property type="match status" value="1"/>
</dbReference>
<dbReference type="FunFam" id="2.30.30.40:FF:000003">
    <property type="entry name" value="Sorbin and SH3 domain-containing protein 1 isoform 2"/>
    <property type="match status" value="1"/>
</dbReference>
<dbReference type="FunFam" id="2.30.30.40:FF:000004">
    <property type="entry name" value="Sorbin and SH3 domain-containing protein 1 isoform 2"/>
    <property type="match status" value="1"/>
</dbReference>
<dbReference type="Gene3D" id="2.30.30.40">
    <property type="entry name" value="SH3 Domains"/>
    <property type="match status" value="3"/>
</dbReference>
<dbReference type="InterPro" id="IPR050384">
    <property type="entry name" value="Endophilin_SH3RF"/>
</dbReference>
<dbReference type="InterPro" id="IPR036028">
    <property type="entry name" value="SH3-like_dom_sf"/>
</dbReference>
<dbReference type="InterPro" id="IPR001452">
    <property type="entry name" value="SH3_domain"/>
</dbReference>
<dbReference type="InterPro" id="IPR003127">
    <property type="entry name" value="SoHo_dom"/>
</dbReference>
<dbReference type="InterPro" id="IPR035606">
    <property type="entry name" value="SORBS1_SH3"/>
</dbReference>
<dbReference type="InterPro" id="IPR035610">
    <property type="entry name" value="SORBS1_SH3_1"/>
</dbReference>
<dbReference type="InterPro" id="IPR035611">
    <property type="entry name" value="SORBS1_SH3_2"/>
</dbReference>
<dbReference type="PANTHER" id="PTHR14167">
    <property type="entry name" value="SH3 DOMAIN-CONTAINING"/>
    <property type="match status" value="1"/>
</dbReference>
<dbReference type="PANTHER" id="PTHR14167:SF64">
    <property type="entry name" value="SORBIN AND SH3 DOMAIN-CONTAINING PROTEIN 1"/>
    <property type="match status" value="1"/>
</dbReference>
<dbReference type="Pfam" id="PF00018">
    <property type="entry name" value="SH3_1"/>
    <property type="match status" value="1"/>
</dbReference>
<dbReference type="Pfam" id="PF07653">
    <property type="entry name" value="SH3_2"/>
    <property type="match status" value="1"/>
</dbReference>
<dbReference type="Pfam" id="PF14604">
    <property type="entry name" value="SH3_9"/>
    <property type="match status" value="1"/>
</dbReference>
<dbReference type="Pfam" id="PF02208">
    <property type="entry name" value="Sorb"/>
    <property type="match status" value="1"/>
</dbReference>
<dbReference type="PRINTS" id="PR00499">
    <property type="entry name" value="P67PHOX"/>
</dbReference>
<dbReference type="PRINTS" id="PR00452">
    <property type="entry name" value="SH3DOMAIN"/>
</dbReference>
<dbReference type="SMART" id="SM00326">
    <property type="entry name" value="SH3"/>
    <property type="match status" value="3"/>
</dbReference>
<dbReference type="SMART" id="SM00459">
    <property type="entry name" value="Sorb"/>
    <property type="match status" value="1"/>
</dbReference>
<dbReference type="SUPFAM" id="SSF50044">
    <property type="entry name" value="SH3-domain"/>
    <property type="match status" value="3"/>
</dbReference>
<dbReference type="PROSITE" id="PS50002">
    <property type="entry name" value="SH3"/>
    <property type="match status" value="3"/>
</dbReference>
<dbReference type="PROSITE" id="PS50831">
    <property type="entry name" value="SOHO"/>
    <property type="match status" value="1"/>
</dbReference>
<organism>
    <name type="scientific">Mus musculus</name>
    <name type="common">Mouse</name>
    <dbReference type="NCBI Taxonomy" id="10090"/>
    <lineage>
        <taxon>Eukaryota</taxon>
        <taxon>Metazoa</taxon>
        <taxon>Chordata</taxon>
        <taxon>Craniata</taxon>
        <taxon>Vertebrata</taxon>
        <taxon>Euteleostomi</taxon>
        <taxon>Mammalia</taxon>
        <taxon>Eutheria</taxon>
        <taxon>Euarchontoglires</taxon>
        <taxon>Glires</taxon>
        <taxon>Rodentia</taxon>
        <taxon>Myomorpha</taxon>
        <taxon>Muroidea</taxon>
        <taxon>Muridae</taxon>
        <taxon>Murinae</taxon>
        <taxon>Mus</taxon>
        <taxon>Mus</taxon>
    </lineage>
</organism>
<accession>Q62417</accession>
<accession>Q80TF8</accession>
<accession>Q8BZI3</accession>
<accession>Q8K3Y2</accession>
<accession>Q921F8</accession>
<accession>Q9Z0Z8</accession>
<accession>Q9Z0Z9</accession>
<proteinExistence type="evidence at protein level"/>
<comment type="function">
    <text evidence="8 15 16">Plays a role in tyrosine phosphorylation of CBL by linking CBL to the insulin receptor. Required for insulin-stimulated glucose transport. Involved in formation of actin stress fibers and focal adhesions.</text>
</comment>
<comment type="subunit">
    <text evidence="1 7 8 9 10 12 15 16">Interacts (via SH3 domain 2) with PXN (By similarity). Interacts with the long isoform of AFDN and with VCL. AFDN and VCL bind to SORBS1 in a competitive manner and do not form a ternary complex. Interacts with ABL1, CBL, CBLB and INPPL1/SHIP2 through the third SH3 domain. Interaction with ABL1 occurs only after insulin stimulation while this has no effect on the interaction with INPPL1. Interacts with the insulin receptor but dissociates from it following insulin stimulation. Also interacts with SCA7, PTK2/FAK1 and flotillin. Interacts (via third SH3 domain) with the Ten-1 ICD form of TENM1; the interaction induces the translocation of SORBS1 to the nucleus. Interacts with INSM1.</text>
</comment>
<comment type="interaction">
    <interactant intactId="EBI-7072893">
        <id>Q62417-2</id>
    </interactant>
    <interactant intactId="EBI-702209">
        <id>P49023</id>
        <label>PXN</label>
    </interactant>
    <organismsDiffer>true</organismsDiffer>
    <experiments>8</experiments>
</comment>
<comment type="interaction">
    <interactant intactId="EBI-7072893">
        <id>Q62417-2</id>
    </interactant>
    <interactant intactId="EBI-716775">
        <id>P18206</id>
        <label>VCL</label>
    </interactant>
    <organismsDiffer>true</organismsDiffer>
    <experiments>3</experiments>
</comment>
<comment type="subcellular location">
    <subcellularLocation>
        <location>Cell junction</location>
        <location>Adherens junction</location>
    </subcellularLocation>
    <subcellularLocation>
        <location>Cell membrane</location>
    </subcellularLocation>
    <subcellularLocation>
        <location>Cytoplasm</location>
        <location>Cytoskeleton</location>
    </subcellularLocation>
    <subcellularLocation>
        <location evidence="1">Cell junction</location>
        <location evidence="1">Focal adhesion</location>
    </subcellularLocation>
    <subcellularLocation>
        <location>Nucleus</location>
    </subcellularLocation>
    <subcellularLocation>
        <location>Nucleus matrix</location>
    </subcellularLocation>
    <text evidence="1">Colocalized with PXN at focal adhesions during myogenic differentiation (By similarity). Colocalizes with actin stress fibers. Also detected at the plasma membrane and in neuronal intranuclear inclusions. Colocalizes with the Ten-1 ICD form of TENM1 in the nucleus.</text>
</comment>
<comment type="alternative products">
    <event type="alternative splicing"/>
    <isoform>
        <id>Q62417-1</id>
        <name evidence="24">1</name>
        <sequence type="displayed"/>
    </isoform>
    <isoform>
        <id>Q62417-2</id>
        <name evidence="11">2</name>
        <name evidence="19">CAPsm</name>
        <sequence type="described" ref="VSP_050886 VSP_050889 VSP_050890 VSP_050892"/>
    </isoform>
    <isoform>
        <id>Q62417-3</id>
        <name evidence="7">3</name>
        <name evidence="18">Ponsin-2</name>
        <sequence type="described" ref="VSP_050886 VSP_050891 VSP_050892 VSP_050893"/>
    </isoform>
    <isoform>
        <id>Q62417-4</id>
        <name evidence="7">4</name>
        <name evidence="18">Ponsin-1</name>
        <sequence type="described" ref="VSP_050885 VSP_050886 VSP_050889 VSP_050890 VSP_050892 VSP_050893"/>
    </isoform>
    <isoform>
        <id>Q62417-5</id>
        <name evidence="15 17">5</name>
        <sequence type="described" ref="VSP_050886 VSP_050889 VSP_050890 VSP_050892 VSP_050893"/>
    </isoform>
    <isoform>
        <id>Q62417-6</id>
        <name evidence="24">6</name>
        <sequence type="described" ref="VSP_050886 VSP_050887 VSP_050889 VSP_050890 VSP_050892 VSP_050893"/>
    </isoform>
    <isoform>
        <id>Q62417-7</id>
        <name evidence="24">7</name>
        <sequence type="described" ref="VSP_050886 VSP_050888 VSP_050889 VSP_050890 VSP_050892 VSP_050894"/>
    </isoform>
</comment>
<comment type="tissue specificity">
    <text evidence="7 15">Expressed in all tissues tested: heart, brain, spleen, lung, liver, muscle, kidney and testis. Expressed in 3T3-L1 adipocytes but not in 3T3-L1 fibroblasts.</text>
</comment>
<comment type="PTM">
    <text evidence="13">O-glycosylated.</text>
</comment>
<comment type="sequence caution" evidence="24">
    <conflict type="erroneous initiation">
        <sequence resource="EMBL-CDS" id="BAC65769"/>
    </conflict>
    <text>Extended N-terminus.</text>
</comment>
<protein>
    <recommendedName>
        <fullName>Sorbin and SH3 domain-containing protein 1</fullName>
    </recommendedName>
    <alternativeName>
        <fullName>Ponsin</fullName>
    </alternativeName>
    <alternativeName>
        <fullName>SH3 domain protein 5</fullName>
    </alternativeName>
    <alternativeName>
        <fullName>SH3P12</fullName>
    </alternativeName>
    <alternativeName>
        <fullName>c-Cbl-associated protein</fullName>
        <shortName>CAP</shortName>
    </alternativeName>
</protein>
<reference key="1">
    <citation type="journal article" date="1996" name="Nat. Biotechnol.">
        <title>Cloning of ligand targets: systematic isolation of SH3 domain-containing proteins.</title>
        <authorList>
            <person name="Sparks A.B."/>
            <person name="Hoffman N.G."/>
            <person name="McConnell S.J."/>
            <person name="Fowlkes D.M."/>
            <person name="Kay B.K."/>
        </authorList>
    </citation>
    <scope>NUCLEOTIDE SEQUENCE [MRNA] (ISOFORM 5)</scope>
    <source>
        <tissue evidence="17">Embryo</tissue>
    </source>
</reference>
<reference evidence="24" key="2">
    <citation type="journal article" date="1998" name="Mol. Cell. Biol.">
        <title>A novel, multifunctional c-Cbl binding protein in insulin receptor signaling in 3T3-L1 adipocytes.</title>
        <authorList>
            <person name="Ribon V."/>
            <person name="Printen J.A."/>
            <person name="Hoffman N.G."/>
            <person name="Kay B.K."/>
            <person name="Saltiel A.R."/>
        </authorList>
    </citation>
    <scope>NUCLEOTIDE SEQUENCE [MRNA] (ISOFORM 5)</scope>
    <scope>FUNCTION</scope>
    <scope>TISSUE SPECIFICITY</scope>
    <scope>INTERACTION WITH CBL AND INSULIN RECEPTOR</scope>
</reference>
<reference evidence="24 25" key="3">
    <citation type="journal article" date="1999" name="J. Cell Biol.">
        <title>Ponsin/SH3P12: an l-afadin- and vinculin-binding protein localized at cell-cell and cell-matrix adherens junctions.</title>
        <authorList>
            <person name="Mandai K."/>
            <person name="Nakanishi H."/>
            <person name="Satoh A."/>
            <person name="Takahashi K."/>
            <person name="Satoh K."/>
            <person name="Nishioka H."/>
            <person name="Mizoguchi A."/>
            <person name="Takai Y."/>
        </authorList>
    </citation>
    <scope>NUCLEOTIDE SEQUENCE [MRNA] (ISOFORMS 3 AND 4)</scope>
    <scope>SUBCELLULAR LOCATION</scope>
    <scope>TISSUE SPECIFICITY</scope>
    <scope>INTERACTION WITH AFDN AND VCL</scope>
    <source>
        <tissue evidence="7">Brain</tissue>
    </source>
</reference>
<reference evidence="24" key="4">
    <citation type="journal article" date="2004" name="Biochem. Biophys. Res. Commun.">
        <title>cDNA cloning and functional characterization of a novel splice variant of c-Cbl-associated protein from mouse skeletal muscle.</title>
        <authorList>
            <person name="Alcazar O."/>
            <person name="Ho R.C."/>
            <person name="Fujii N."/>
            <person name="Goodyear L.J."/>
        </authorList>
    </citation>
    <scope>NUCLEOTIDE SEQUENCE [MRNA] (ISOFORM 2)</scope>
</reference>
<reference evidence="24 27" key="5">
    <citation type="journal article" date="2003" name="DNA Res.">
        <title>Prediction of the coding sequences of mouse homologues of KIAA gene: II. The complete nucleotide sequences of 400 mouse KIAA-homologous cDNAs identified by screening of terminal sequences of cDNA clones randomly sampled from size-fractionated libraries.</title>
        <authorList>
            <person name="Okazaki N."/>
            <person name="Kikuno R."/>
            <person name="Ohara R."/>
            <person name="Inamoto S."/>
            <person name="Aizawa H."/>
            <person name="Yuasa S."/>
            <person name="Nakajima D."/>
            <person name="Nagase T."/>
            <person name="Ohara O."/>
            <person name="Koga H."/>
        </authorList>
    </citation>
    <scope>NUCLEOTIDE SEQUENCE [LARGE SCALE MRNA] (ISOFORM 1)</scope>
    <source>
        <tissue>Fetal brain</tissue>
    </source>
</reference>
<reference key="6">
    <citation type="submission" date="2003-12" db="EMBL/GenBank/DDBJ databases">
        <authorList>
            <person name="Okazaki N."/>
            <person name="Kikuno R."/>
            <person name="Nagase T."/>
            <person name="Ohara O."/>
            <person name="Koga H."/>
        </authorList>
    </citation>
    <scope>SEQUENCE REVISION</scope>
</reference>
<reference key="7">
    <citation type="journal article" date="2005" name="Science">
        <title>The transcriptional landscape of the mammalian genome.</title>
        <authorList>
            <person name="Carninci P."/>
            <person name="Kasukawa T."/>
            <person name="Katayama S."/>
            <person name="Gough J."/>
            <person name="Frith M.C."/>
            <person name="Maeda N."/>
            <person name="Oyama R."/>
            <person name="Ravasi T."/>
            <person name="Lenhard B."/>
            <person name="Wells C."/>
            <person name="Kodzius R."/>
            <person name="Shimokawa K."/>
            <person name="Bajic V.B."/>
            <person name="Brenner S.E."/>
            <person name="Batalov S."/>
            <person name="Forrest A.R."/>
            <person name="Zavolan M."/>
            <person name="Davis M.J."/>
            <person name="Wilming L.G."/>
            <person name="Aidinis V."/>
            <person name="Allen J.E."/>
            <person name="Ambesi-Impiombato A."/>
            <person name="Apweiler R."/>
            <person name="Aturaliya R.N."/>
            <person name="Bailey T.L."/>
            <person name="Bansal M."/>
            <person name="Baxter L."/>
            <person name="Beisel K.W."/>
            <person name="Bersano T."/>
            <person name="Bono H."/>
            <person name="Chalk A.M."/>
            <person name="Chiu K.P."/>
            <person name="Choudhary V."/>
            <person name="Christoffels A."/>
            <person name="Clutterbuck D.R."/>
            <person name="Crowe M.L."/>
            <person name="Dalla E."/>
            <person name="Dalrymple B.P."/>
            <person name="de Bono B."/>
            <person name="Della Gatta G."/>
            <person name="di Bernardo D."/>
            <person name="Down T."/>
            <person name="Engstrom P."/>
            <person name="Fagiolini M."/>
            <person name="Faulkner G."/>
            <person name="Fletcher C.F."/>
            <person name="Fukushima T."/>
            <person name="Furuno M."/>
            <person name="Futaki S."/>
            <person name="Gariboldi M."/>
            <person name="Georgii-Hemming P."/>
            <person name="Gingeras T.R."/>
            <person name="Gojobori T."/>
            <person name="Green R.E."/>
            <person name="Gustincich S."/>
            <person name="Harbers M."/>
            <person name="Hayashi Y."/>
            <person name="Hensch T.K."/>
            <person name="Hirokawa N."/>
            <person name="Hill D."/>
            <person name="Huminiecki L."/>
            <person name="Iacono M."/>
            <person name="Ikeo K."/>
            <person name="Iwama A."/>
            <person name="Ishikawa T."/>
            <person name="Jakt M."/>
            <person name="Kanapin A."/>
            <person name="Katoh M."/>
            <person name="Kawasawa Y."/>
            <person name="Kelso J."/>
            <person name="Kitamura H."/>
            <person name="Kitano H."/>
            <person name="Kollias G."/>
            <person name="Krishnan S.P."/>
            <person name="Kruger A."/>
            <person name="Kummerfeld S.K."/>
            <person name="Kurochkin I.V."/>
            <person name="Lareau L.F."/>
            <person name="Lazarevic D."/>
            <person name="Lipovich L."/>
            <person name="Liu J."/>
            <person name="Liuni S."/>
            <person name="McWilliam S."/>
            <person name="Madan Babu M."/>
            <person name="Madera M."/>
            <person name="Marchionni L."/>
            <person name="Matsuda H."/>
            <person name="Matsuzawa S."/>
            <person name="Miki H."/>
            <person name="Mignone F."/>
            <person name="Miyake S."/>
            <person name="Morris K."/>
            <person name="Mottagui-Tabar S."/>
            <person name="Mulder N."/>
            <person name="Nakano N."/>
            <person name="Nakauchi H."/>
            <person name="Ng P."/>
            <person name="Nilsson R."/>
            <person name="Nishiguchi S."/>
            <person name="Nishikawa S."/>
            <person name="Nori F."/>
            <person name="Ohara O."/>
            <person name="Okazaki Y."/>
            <person name="Orlando V."/>
            <person name="Pang K.C."/>
            <person name="Pavan W.J."/>
            <person name="Pavesi G."/>
            <person name="Pesole G."/>
            <person name="Petrovsky N."/>
            <person name="Piazza S."/>
            <person name="Reed J."/>
            <person name="Reid J.F."/>
            <person name="Ring B.Z."/>
            <person name="Ringwald M."/>
            <person name="Rost B."/>
            <person name="Ruan Y."/>
            <person name="Salzberg S.L."/>
            <person name="Sandelin A."/>
            <person name="Schneider C."/>
            <person name="Schoenbach C."/>
            <person name="Sekiguchi K."/>
            <person name="Semple C.A."/>
            <person name="Seno S."/>
            <person name="Sessa L."/>
            <person name="Sheng Y."/>
            <person name="Shibata Y."/>
            <person name="Shimada H."/>
            <person name="Shimada K."/>
            <person name="Silva D."/>
            <person name="Sinclair B."/>
            <person name="Sperling S."/>
            <person name="Stupka E."/>
            <person name="Sugiura K."/>
            <person name="Sultana R."/>
            <person name="Takenaka Y."/>
            <person name="Taki K."/>
            <person name="Tammoja K."/>
            <person name="Tan S.L."/>
            <person name="Tang S."/>
            <person name="Taylor M.S."/>
            <person name="Tegner J."/>
            <person name="Teichmann S.A."/>
            <person name="Ueda H.R."/>
            <person name="van Nimwegen E."/>
            <person name="Verardo R."/>
            <person name="Wei C.L."/>
            <person name="Yagi K."/>
            <person name="Yamanishi H."/>
            <person name="Zabarovsky E."/>
            <person name="Zhu S."/>
            <person name="Zimmer A."/>
            <person name="Hide W."/>
            <person name="Bult C."/>
            <person name="Grimmond S.M."/>
            <person name="Teasdale R.D."/>
            <person name="Liu E.T."/>
            <person name="Brusic V."/>
            <person name="Quackenbush J."/>
            <person name="Wahlestedt C."/>
            <person name="Mattick J.S."/>
            <person name="Hume D.A."/>
            <person name="Kai C."/>
            <person name="Sasaki D."/>
            <person name="Tomaru Y."/>
            <person name="Fukuda S."/>
            <person name="Kanamori-Katayama M."/>
            <person name="Suzuki M."/>
            <person name="Aoki J."/>
            <person name="Arakawa T."/>
            <person name="Iida J."/>
            <person name="Imamura K."/>
            <person name="Itoh M."/>
            <person name="Kato T."/>
            <person name="Kawaji H."/>
            <person name="Kawagashira N."/>
            <person name="Kawashima T."/>
            <person name="Kojima M."/>
            <person name="Kondo S."/>
            <person name="Konno H."/>
            <person name="Nakano K."/>
            <person name="Ninomiya N."/>
            <person name="Nishio T."/>
            <person name="Okada M."/>
            <person name="Plessy C."/>
            <person name="Shibata K."/>
            <person name="Shiraki T."/>
            <person name="Suzuki S."/>
            <person name="Tagami M."/>
            <person name="Waki K."/>
            <person name="Watahiki A."/>
            <person name="Okamura-Oho Y."/>
            <person name="Suzuki H."/>
            <person name="Kawai J."/>
            <person name="Hayashizaki Y."/>
        </authorList>
    </citation>
    <scope>NUCLEOTIDE SEQUENCE [LARGE SCALE MRNA] (ISOFORM 7)</scope>
    <source>
        <strain>C57BL/6J</strain>
        <tissue>Urinary bladder</tissue>
    </source>
</reference>
<reference evidence="24 26" key="8">
    <citation type="journal article" date="2004" name="Genome Res.">
        <title>The status, quality, and expansion of the NIH full-length cDNA project: the Mammalian Gene Collection (MGC).</title>
        <authorList>
            <consortium name="The MGC Project Team"/>
        </authorList>
    </citation>
    <scope>NUCLEOTIDE SEQUENCE [LARGE SCALE MRNA] (ISOFORM 6)</scope>
    <source>
        <strain evidence="26">FVB/N</strain>
        <tissue evidence="26">Mammary gland</tissue>
    </source>
</reference>
<reference evidence="24" key="9">
    <citation type="journal article" date="1998" name="J. Biol. Chem.">
        <title>A role for CAP, a novel, multifunctional Src homology 3 domain-containing protein in formation of actin stress fibers and focal adhesions.</title>
        <authorList>
            <person name="Ribon V."/>
            <person name="Herrera R."/>
            <person name="Kay B.K."/>
            <person name="Saltiel A.R."/>
        </authorList>
    </citation>
    <scope>FUNCTION</scope>
    <scope>SUBCELLULAR LOCATION</scope>
    <scope>INTERACTION WITH PTK2/FAK1</scope>
</reference>
<reference evidence="24" key="10">
    <citation type="journal article" date="2000" name="Nature">
        <title>CAP defines a second signalling pathway required for insulin-stimulated glucose transport.</title>
        <authorList>
            <person name="Baumann C.A."/>
            <person name="Ribon V."/>
            <person name="Kanzaki M."/>
            <person name="Thurmond D.C."/>
            <person name="Mora S."/>
            <person name="Shigematsu S."/>
            <person name="Bickel P.E."/>
            <person name="Pessin J.E."/>
            <person name="Saltiel A.R."/>
        </authorList>
    </citation>
    <scope>FUNCTION</scope>
    <scope>SUBCELLULAR LOCATION</scope>
    <scope>INTERACTION WITH FLOTILLIN</scope>
</reference>
<reference key="11">
    <citation type="journal article" date="2002" name="Genomics">
        <title>The zinc-finger transcription factor INSM1 is expressed during embryo development and interacts with the Cbl-associated protein.</title>
        <authorList>
            <person name="Xie J."/>
            <person name="Cai T."/>
            <person name="Zhang H."/>
            <person name="Lan M.S."/>
            <person name="Notkins A.L."/>
        </authorList>
    </citation>
    <scope>INTERACTION WITH INSM1</scope>
</reference>
<reference key="12">
    <citation type="journal article" date="2003" name="J. Biol. Chem.">
        <title>The roles of Cbl-b and c-Cbl in insulin-stimulated glucose transport.</title>
        <authorList>
            <person name="Liu J."/>
            <person name="DeYoung S.M."/>
            <person name="Hwang J.B."/>
            <person name="O'Leary E.E."/>
            <person name="Saltiel A.R."/>
        </authorList>
    </citation>
    <scope>INTERACTION WITH CBLB</scope>
</reference>
<reference key="13">
    <citation type="journal article" date="2005" name="Exp. Cell Res.">
        <title>The intracellular domain of teneurin-1 interacts with MBD1 and CAP/ponsin resulting in subcellular codistribution and translocation to the nuclear matrix.</title>
        <authorList>
            <person name="Nunes S.M."/>
            <person name="Ferralli J."/>
            <person name="Choi K."/>
            <person name="Brown-Luedi M."/>
            <person name="Minet A.D."/>
            <person name="Chiquet-Ehrismann R."/>
        </authorList>
    </citation>
    <scope>INTERACTION WITH TENM1</scope>
    <scope>SUBCELLULAR LOCATION</scope>
</reference>
<reference key="14">
    <citation type="journal article" date="2006" name="Mol. Cell. Proteomics">
        <title>Comprehensive identification of phosphorylation sites in postsynaptic density preparations.</title>
        <authorList>
            <person name="Trinidad J.C."/>
            <person name="Specht C.G."/>
            <person name="Thalhammer A."/>
            <person name="Schoepfer R."/>
            <person name="Burlingame A.L."/>
        </authorList>
    </citation>
    <scope>IDENTIFICATION BY MASS SPECTROMETRY [LARGE SCALE ANALYSIS]</scope>
    <source>
        <tissue>Brain</tissue>
    </source>
</reference>
<reference key="15">
    <citation type="journal article" date="2006" name="Mol. Cell. Proteomics">
        <title>O-linked N-acetylglucosamine proteomics of postsynaptic density preparations using lectin weak affinity chromatography and mass spectrometry.</title>
        <authorList>
            <person name="Vosseller K."/>
            <person name="Trinidad J.C."/>
            <person name="Chalkley R.J."/>
            <person name="Specht C.G."/>
            <person name="Thalhammer A."/>
            <person name="Lynn A.J."/>
            <person name="Snedecor J.O."/>
            <person name="Guan S."/>
            <person name="Medzihradszky K.F."/>
            <person name="Maltby D.A."/>
            <person name="Schoepfer R."/>
            <person name="Burlingame A.L."/>
        </authorList>
    </citation>
    <scope>GLYCOSYLATION [LARGE SCALE ANALYSIS]</scope>
    <source>
        <tissue>Brain</tissue>
    </source>
</reference>
<reference key="16">
    <citation type="journal article" date="2007" name="Mol. Cell. Proteomics">
        <title>Qualitative and quantitative analyses of protein phosphorylation in naive and stimulated mouse synaptosomal preparations.</title>
        <authorList>
            <person name="Munton R.P."/>
            <person name="Tweedie-Cullen R."/>
            <person name="Livingstone-Zatchej M."/>
            <person name="Weinandy F."/>
            <person name="Waidelich M."/>
            <person name="Longo D."/>
            <person name="Gehrig P."/>
            <person name="Potthast F."/>
            <person name="Rutishauser D."/>
            <person name="Gerrits B."/>
            <person name="Panse C."/>
            <person name="Schlapbach R."/>
            <person name="Mansuy I.M."/>
        </authorList>
    </citation>
    <scope>IDENTIFICATION BY MASS SPECTROMETRY [LARGE SCALE ANALYSIS]</scope>
    <source>
        <tissue>Brain cortex</tissue>
    </source>
</reference>
<reference key="17">
    <citation type="journal article" date="2007" name="Proc. Natl. Acad. Sci. U.S.A.">
        <title>Large-scale phosphorylation analysis of mouse liver.</title>
        <authorList>
            <person name="Villen J."/>
            <person name="Beausoleil S.A."/>
            <person name="Gerber S.A."/>
            <person name="Gygi S.P."/>
        </authorList>
    </citation>
    <scope>PHOSPHORYLATION [LARGE SCALE ANALYSIS] AT SER-204</scope>
    <scope>IDENTIFICATION BY MASS SPECTROMETRY [LARGE SCALE ANALYSIS]</scope>
    <source>
        <tissue>Liver</tissue>
    </source>
</reference>
<reference key="18">
    <citation type="journal article" date="2009" name="BMC Cell Biol.">
        <title>Cbl-associated protein is tyrosine phosphorylated by c-Abl and c-Src kinases.</title>
        <authorList>
            <person name="Fernow I."/>
            <person name="Tomasovic A."/>
            <person name="Siehoff-Icking A."/>
            <person name="Tikkanen R."/>
        </authorList>
    </citation>
    <scope>PHOSPHORYLATION AT TYR-325; TYR-421 AND TYR-1238</scope>
</reference>
<reference key="19">
    <citation type="journal article" date="2010" name="Cell">
        <title>A tissue-specific atlas of mouse protein phosphorylation and expression.</title>
        <authorList>
            <person name="Huttlin E.L."/>
            <person name="Jedrychowski M.P."/>
            <person name="Elias J.E."/>
            <person name="Goswami T."/>
            <person name="Rad R."/>
            <person name="Beausoleil S.A."/>
            <person name="Villen J."/>
            <person name="Haas W."/>
            <person name="Sowa M.E."/>
            <person name="Gygi S.P."/>
        </authorList>
    </citation>
    <scope>PHOSPHORYLATION [LARGE SCALE ANALYSIS] AT THR-51; SER-55; SER-58; SER-62; THR-179; SER-185; SER-204; SER-209; SER-261; SER-270; SER-345; SER-376; SER-407; SER-432; SER-969; THR-1189; TYR-1198; SER-1201 AND SER-1209</scope>
    <scope>PHOSPHORYLATION [LARGE SCALE ANALYSIS] AT SER-164 AND SER-346 (ISOFORMS 2 AND 5)</scope>
    <scope>PHOSPHORYLATION [LARGE SCALE ANALYSIS] AT SER-194 AND SER-376 (ISOFORM 4)</scope>
    <scope>PHOSPHORYLATION [LARGE SCALE ANALYSIS] AT SER-175 AND SER-357 (ISOFORM 6)</scope>
    <scope>PHOSPHORYLATION [LARGE SCALE ANALYSIS] AT SER-288 AND SER-470 (ISOFORM 7)</scope>
    <scope>IDENTIFICATION BY MASS SPECTROMETRY [LARGE SCALE ANALYSIS]</scope>
    <source>
        <tissue>Brain</tissue>
        <tissue>Brown adipose tissue</tissue>
        <tissue>Heart</tissue>
        <tissue>Kidney</tissue>
        <tissue>Liver</tissue>
        <tissue>Lung</tissue>
        <tissue>Pancreas</tissue>
        <tissue>Spleen</tissue>
        <tissue>Testis</tissue>
    </source>
</reference>
<keyword id="KW-0025">Alternative splicing</keyword>
<keyword id="KW-0965">Cell junction</keyword>
<keyword id="KW-1003">Cell membrane</keyword>
<keyword id="KW-0963">Cytoplasm</keyword>
<keyword id="KW-0206">Cytoskeleton</keyword>
<keyword id="KW-0325">Glycoprotein</keyword>
<keyword id="KW-0472">Membrane</keyword>
<keyword id="KW-0539">Nucleus</keyword>
<keyword id="KW-0597">Phosphoprotein</keyword>
<keyword id="KW-1185">Reference proteome</keyword>
<keyword id="KW-0677">Repeat</keyword>
<keyword id="KW-0728">SH3 domain</keyword>
<keyword id="KW-0813">Transport</keyword>
<name>SRBS1_MOUSE</name>
<gene>
    <name evidence="28" type="primary">Sorbs1</name>
    <name evidence="27" type="synonym">Kiaa1296</name>
    <name evidence="23" type="synonym">Sh3d5</name>
</gene>
<feature type="chain" id="PRO_0000072186" description="Sorbin and SH3 domain-containing protein 1">
    <location>
        <begin position="1"/>
        <end position="1290"/>
    </location>
</feature>
<feature type="domain" description="SoHo" evidence="5">
    <location>
        <begin position="202"/>
        <end position="247"/>
    </location>
</feature>
<feature type="domain" description="SH3 1" evidence="4">
    <location>
        <begin position="1049"/>
        <end position="1108"/>
    </location>
</feature>
<feature type="domain" description="SH3 2" evidence="4">
    <location>
        <begin position="1123"/>
        <end position="1184"/>
    </location>
</feature>
<feature type="domain" description="SH3 3" evidence="4">
    <location>
        <begin position="1229"/>
        <end position="1290"/>
    </location>
</feature>
<feature type="region of interest" description="Disordered" evidence="6">
    <location>
        <begin position="1"/>
        <end position="211"/>
    </location>
</feature>
<feature type="region of interest" description="Disordered" evidence="6">
    <location>
        <begin position="238"/>
        <end position="271"/>
    </location>
</feature>
<feature type="region of interest" description="Disordered" evidence="6">
    <location>
        <begin position="286"/>
        <end position="313"/>
    </location>
</feature>
<feature type="region of interest" description="Disordered" evidence="6">
    <location>
        <begin position="389"/>
        <end position="416"/>
    </location>
</feature>
<feature type="region of interest" description="Disordered" evidence="6">
    <location>
        <begin position="463"/>
        <end position="482"/>
    </location>
</feature>
<feature type="region of interest" description="Disordered" evidence="6">
    <location>
        <begin position="588"/>
        <end position="607"/>
    </location>
</feature>
<feature type="region of interest" description="Disordered" evidence="6">
    <location>
        <begin position="697"/>
        <end position="739"/>
    </location>
</feature>
<feature type="region of interest" description="Disordered" evidence="6">
    <location>
        <begin position="783"/>
        <end position="803"/>
    </location>
</feature>
<feature type="region of interest" description="Disordered" evidence="6">
    <location>
        <begin position="822"/>
        <end position="841"/>
    </location>
</feature>
<feature type="region of interest" description="Disordered" evidence="6">
    <location>
        <begin position="862"/>
        <end position="972"/>
    </location>
</feature>
<feature type="region of interest" description="Disordered" evidence="6">
    <location>
        <begin position="1198"/>
        <end position="1227"/>
    </location>
</feature>
<feature type="compositionally biased region" description="Low complexity" evidence="6">
    <location>
        <begin position="45"/>
        <end position="61"/>
    </location>
</feature>
<feature type="compositionally biased region" description="Basic and acidic residues" evidence="6">
    <location>
        <begin position="62"/>
        <end position="71"/>
    </location>
</feature>
<feature type="compositionally biased region" description="Polar residues" evidence="6">
    <location>
        <begin position="83"/>
        <end position="95"/>
    </location>
</feature>
<feature type="compositionally biased region" description="Polar residues" evidence="6">
    <location>
        <begin position="123"/>
        <end position="153"/>
    </location>
</feature>
<feature type="compositionally biased region" description="Basic and acidic residues" evidence="6">
    <location>
        <begin position="161"/>
        <end position="173"/>
    </location>
</feature>
<feature type="compositionally biased region" description="Basic and acidic residues" evidence="6">
    <location>
        <begin position="189"/>
        <end position="199"/>
    </location>
</feature>
<feature type="compositionally biased region" description="Basic and acidic residues" evidence="6">
    <location>
        <begin position="240"/>
        <end position="260"/>
    </location>
</feature>
<feature type="compositionally biased region" description="Basic and acidic residues" evidence="6">
    <location>
        <begin position="299"/>
        <end position="313"/>
    </location>
</feature>
<feature type="compositionally biased region" description="Polar residues" evidence="6">
    <location>
        <begin position="392"/>
        <end position="412"/>
    </location>
</feature>
<feature type="compositionally biased region" description="Polar residues" evidence="6">
    <location>
        <begin position="595"/>
        <end position="606"/>
    </location>
</feature>
<feature type="compositionally biased region" description="Polar residues" evidence="6">
    <location>
        <begin position="704"/>
        <end position="722"/>
    </location>
</feature>
<feature type="compositionally biased region" description="Low complexity" evidence="6">
    <location>
        <begin position="1198"/>
        <end position="1210"/>
    </location>
</feature>
<feature type="compositionally biased region" description="Polar residues" evidence="6">
    <location>
        <begin position="1211"/>
        <end position="1227"/>
    </location>
</feature>
<feature type="modified residue" description="Phosphothreonine" evidence="30">
    <location>
        <position position="51"/>
    </location>
</feature>
<feature type="modified residue" description="Phosphoserine" evidence="30">
    <location>
        <position position="55"/>
    </location>
</feature>
<feature type="modified residue" description="Phosphoserine" evidence="30">
    <location>
        <position position="58"/>
    </location>
</feature>
<feature type="modified residue" description="Phosphoserine" evidence="30">
    <location>
        <position position="62"/>
    </location>
</feature>
<feature type="modified residue" description="Phosphothreonine" evidence="30">
    <location>
        <position position="179"/>
    </location>
</feature>
<feature type="modified residue" description="Phosphoserine" evidence="30">
    <location>
        <position position="185"/>
    </location>
</feature>
<feature type="modified residue" description="Phosphoserine" evidence="29 30">
    <location>
        <position position="204"/>
    </location>
</feature>
<feature type="modified residue" description="Phosphoserine" evidence="30">
    <location>
        <position position="209"/>
    </location>
</feature>
<feature type="modified residue" description="Phosphoserine" evidence="2">
    <location>
        <position position="254"/>
    </location>
</feature>
<feature type="modified residue" description="Phosphoserine" evidence="30">
    <location>
        <position position="261"/>
    </location>
</feature>
<feature type="modified residue" description="Phosphoserine" evidence="30">
    <location>
        <position position="270"/>
    </location>
</feature>
<feature type="modified residue" description="Phosphotyrosine; by ABL1" evidence="14">
    <location>
        <position position="325"/>
    </location>
</feature>
<feature type="modified residue" description="Phosphoserine" evidence="30">
    <location>
        <position position="345"/>
    </location>
</feature>
<feature type="modified residue" description="Phosphoserine" evidence="30">
    <location>
        <position position="376"/>
    </location>
</feature>
<feature type="modified residue" description="Phosphoserine" evidence="30">
    <location>
        <position position="407"/>
    </location>
</feature>
<feature type="modified residue" description="Phosphotyrosine; by ABL1" evidence="14">
    <location>
        <position position="421"/>
    </location>
</feature>
<feature type="modified residue" description="Phosphoserine" evidence="30">
    <location>
        <position position="432"/>
    </location>
</feature>
<feature type="modified residue" description="Phosphothreonine" evidence="3">
    <location>
        <position position="475"/>
    </location>
</feature>
<feature type="modified residue" description="Phosphoserine" evidence="30">
    <location>
        <position position="969"/>
    </location>
</feature>
<feature type="modified residue" description="Phosphothreonine" evidence="30">
    <location>
        <position position="1189"/>
    </location>
</feature>
<feature type="modified residue" description="Phosphotyrosine" evidence="3">
    <location>
        <position position="1193"/>
    </location>
</feature>
<feature type="modified residue" description="Phosphotyrosine" evidence="30">
    <location>
        <position position="1198"/>
    </location>
</feature>
<feature type="modified residue" description="Phosphoserine" evidence="30">
    <location>
        <position position="1201"/>
    </location>
</feature>
<feature type="modified residue" description="Phosphoserine" evidence="30">
    <location>
        <position position="1209"/>
    </location>
</feature>
<feature type="modified residue" description="Phosphotyrosine; by ABL1" evidence="14">
    <location>
        <position position="1238"/>
    </location>
</feature>
<feature type="splice variant" id="VSP_050885" description="In isoform 4." evidence="18">
    <original>K</original>
    <variation>KADPFRARSISAVKIIPVKTVKSPSGLVLPP</variation>
    <location>
        <position position="26"/>
    </location>
</feature>
<feature type="splice variant" id="VSP_050886" description="In isoform 2, isoform 3, isoform 4, isoform 5, isoform 6 and isoform 7." evidence="18 19 20 21 22 23">
    <location>
        <begin position="70"/>
        <end position="78"/>
    </location>
</feature>
<feature type="splice variant" id="VSP_050887" description="In isoform 6." evidence="20">
    <original>G</original>
    <variation>GATSSSSAPSEG</variation>
    <location>
        <position position="117"/>
    </location>
</feature>
<feature type="splice variant" id="VSP_050888" description="In isoform 7." evidence="21">
    <original>G</original>
    <variation>GATSSSSAPSEVIVVPLYLVNTDRGQGQEGTARTPASLGPLGCVHTVPATTPAASPLTFPTLDDFIPPHLQRRPHHSQPASACGSLSPASQTSPPSPPPPLVPPVPEDLHRGLEPDLPGAVSSTG</variation>
    <location>
        <position position="117"/>
    </location>
</feature>
<feature type="splice variant" id="VSP_050889" description="In isoform 2, isoform 4, isoform 5, isoform 6 and isoform 7." evidence="18 19 20 21 22 23">
    <original>R</original>
    <variation>REQQKRLSSLS</variation>
    <location>
        <position position="163"/>
    </location>
</feature>
<feature type="splice variant" id="VSP_050890" description="In isoform 2, isoform 4, isoform 5, isoform 6 and isoform 7." evidence="18 19 20 21 22 23">
    <location>
        <begin position="341"/>
        <end position="402"/>
    </location>
</feature>
<feature type="splice variant" id="VSP_050891" description="In isoform 3." evidence="18">
    <original>TNLEKDLSFCQAELEADLEKVETVNKSPSANSPQ</original>
    <variation>PPKKIWDYTPGDCSILPREDRK</variation>
    <location>
        <begin position="369"/>
        <end position="402"/>
    </location>
</feature>
<feature type="splice variant" id="VSP_050892" description="In isoform 2, isoform 3, isoform 4, isoform 5, isoform 6 and isoform 7." evidence="18 19 20 21 22 23">
    <location>
        <begin position="477"/>
        <end position="965"/>
    </location>
</feature>
<feature type="splice variant" id="VSP_050893" description="In isoform 3, isoform 4, isoform 5 and isoform 6." evidence="18 20 22 23">
    <location>
        <begin position="994"/>
        <end position="1049"/>
    </location>
</feature>
<feature type="splice variant" id="VSP_050894" description="In isoform 7." evidence="21">
    <original>QPQAQQRRVTPDRSQPSLDLCSYQALYSYVPQNDDELELRDGDIVDVMEKCDDGWFVGTSRRTRQFGTFPGNYVKPLYL</original>
    <variation>VSKLSNSACSFHPQLCQRHTALLGLLFHALIKSYLEQAGWEFFSYMSVAFS</variation>
    <location>
        <begin position="1212"/>
        <end position="1290"/>
    </location>
</feature>
<feature type="sequence conflict" description="In Ref. 7; BAC28980." evidence="24" ref="7">
    <original>A</original>
    <variation>T</variation>
    <location>
        <position position="205"/>
    </location>
</feature>
<feature type="sequence conflict" description="In Ref. 7; BAC28980." evidence="24" ref="7">
    <original>L</original>
    <variation>P</variation>
    <location>
        <position position="308"/>
    </location>
</feature>
<feature type="sequence conflict" description="In Ref. 4; AAM77354." evidence="24" ref="4">
    <original>K</original>
    <variation>M</variation>
    <location>
        <position position="1004"/>
    </location>
</feature>
<feature type="modified residue" description="Phosphoserine" evidence="30">
    <location sequence="Q62417-2">
        <position position="164"/>
    </location>
</feature>
<feature type="modified residue" description="Phosphoserine" evidence="30">
    <location sequence="Q62417-2">
        <position position="346"/>
    </location>
</feature>
<feature type="modified residue" description="Phosphoserine" evidence="30">
    <location sequence="Q62417-4">
        <position position="194"/>
    </location>
</feature>
<feature type="modified residue" description="Phosphoserine" evidence="30">
    <location sequence="Q62417-4">
        <position position="376"/>
    </location>
</feature>
<feature type="modified residue" description="Phosphoserine" evidence="30">
    <location sequence="Q62417-5">
        <position position="164"/>
    </location>
</feature>
<feature type="modified residue" description="Phosphoserine" evidence="30">
    <location sequence="Q62417-5">
        <position position="346"/>
    </location>
</feature>
<feature type="modified residue" description="Phosphoserine" evidence="30">
    <location sequence="Q62417-6">
        <position position="175"/>
    </location>
</feature>
<feature type="modified residue" description="Phosphoserine" evidence="30">
    <location sequence="Q62417-6">
        <position position="357"/>
    </location>
</feature>
<feature type="modified residue" description="Phosphoserine" evidence="30">
    <location sequence="Q62417-7">
        <position position="288"/>
    </location>
</feature>
<feature type="modified residue" description="Phosphoserine" evidence="30">
    <location sequence="Q62417-7">
        <position position="470"/>
    </location>
</feature>
<evidence type="ECO:0000250" key="1"/>
<evidence type="ECO:0000250" key="2">
    <source>
        <dbReference type="UniProtKB" id="P84109"/>
    </source>
</evidence>
<evidence type="ECO:0000250" key="3">
    <source>
        <dbReference type="UniProtKB" id="Q9BX66"/>
    </source>
</evidence>
<evidence type="ECO:0000255" key="4">
    <source>
        <dbReference type="PROSITE-ProRule" id="PRU00192"/>
    </source>
</evidence>
<evidence type="ECO:0000255" key="5">
    <source>
        <dbReference type="PROSITE-ProRule" id="PRU00195"/>
    </source>
</evidence>
<evidence type="ECO:0000256" key="6">
    <source>
        <dbReference type="SAM" id="MobiDB-lite"/>
    </source>
</evidence>
<evidence type="ECO:0000269" key="7">
    <source>
    </source>
</evidence>
<evidence type="ECO:0000269" key="8">
    <source>
    </source>
</evidence>
<evidence type="ECO:0000269" key="9">
    <source>
    </source>
</evidence>
<evidence type="ECO:0000269" key="10">
    <source>
    </source>
</evidence>
<evidence type="ECO:0000269" key="11">
    <source>
    </source>
</evidence>
<evidence type="ECO:0000269" key="12">
    <source>
    </source>
</evidence>
<evidence type="ECO:0000269" key="13">
    <source>
    </source>
</evidence>
<evidence type="ECO:0000269" key="14">
    <source>
    </source>
</evidence>
<evidence type="ECO:0000269" key="15">
    <source>
    </source>
</evidence>
<evidence type="ECO:0000269" key="16">
    <source>
    </source>
</evidence>
<evidence type="ECO:0000269" key="17">
    <source>
    </source>
</evidence>
<evidence type="ECO:0000303" key="18">
    <source>
    </source>
</evidence>
<evidence type="ECO:0000303" key="19">
    <source>
    </source>
</evidence>
<evidence type="ECO:0000303" key="20">
    <source>
    </source>
</evidence>
<evidence type="ECO:0000303" key="21">
    <source>
    </source>
</evidence>
<evidence type="ECO:0000303" key="22">
    <source>
    </source>
</evidence>
<evidence type="ECO:0000303" key="23">
    <source>
    </source>
</evidence>
<evidence type="ECO:0000305" key="24"/>
<evidence type="ECO:0000312" key="25">
    <source>
        <dbReference type="EMBL" id="AAD16008.1"/>
    </source>
</evidence>
<evidence type="ECO:0000312" key="26">
    <source>
        <dbReference type="EMBL" id="AAH12703.1"/>
    </source>
</evidence>
<evidence type="ECO:0000312" key="27">
    <source>
        <dbReference type="EMBL" id="BAC65769.2"/>
    </source>
</evidence>
<evidence type="ECO:0000312" key="28">
    <source>
        <dbReference type="MGI" id="MGI:700014"/>
    </source>
</evidence>
<evidence type="ECO:0007744" key="29">
    <source>
    </source>
</evidence>
<evidence type="ECO:0007744" key="30">
    <source>
    </source>
</evidence>
<sequence length="1290" mass="143070">MSSECDVGSSKAVVNGLASGNHGPDKDMDPTKICTGKGTVTLRASSSYRGTPSSSPVSPQESPKHESKSGLEPEDPSADEWKLSSSADTNGNAQPSPLAAKGYRSVHPSLSADKPQGSPLLNEVSSSHIETDSQDFPPTSRPSSAYPSTTIVNPTIVLLQHNRDPASERRAGEQDPVPTPAELTSPGRASERRAKDASRRVVRSAQDLSDVSTDEVGIPLRNTERSKDWYKTMFKQIHKLNRDDDSDVHSPRYSFSDDTKSPLSVPRSKSEMNYIEGEKVVKRSATLPLPARSSSLKSSPERNDWEPLDKKVDTRKYRAEPKSIYEYQPGKSSVLTNEKMSRDISPEEIDLKNEPWYKFFSELEFGRPTNLEKDLSFCQAELEADLEKVETVNKSPSANSPQSSAVSPTPDITSEPPGYIYSSNFHAVKRESDGTPGGLASLENERQIYKSVLEGGDIPLQGLSGLKRPSSSASTKVDRKGGNAHMISSSSVHSRTFHTSNALGPGCKHKKPLSAAKACISEILPSKFKPRLSAPSALLQEQKSVLLPSEKAQSCENLCVSLNDSKRGLPLRVGGSIENLLMRSRRDYDSKSSSTMSLQEYGTSSRRPCPLSRKAGLHFSMFYRDMHQINRAGLSLGSISSSSVRDLASHFERSSLTLARGELGASQEGSEHIPKHTVSSRITAFEQLIQRSRSMPSLDFSGRLSKSPTPVLSRSGLTSARSAESLLESTKLRPREMDGMDSGGVYASPTCSNMADHALSFRSLVPSEPLSICSDELDHCSNVSNDSREGSGGSVHGDFPKHRLNKCKGTCPASYTRFTTIRKHEQQSSRQSDWRSDSRGDKNSLLRNIHLMSPLPFRLKKPLQQHPRQPPPSDSSESPAGQKADLPCHDPQDQPHSAGKPQVPTRLSSRHTMARLSHNSEPPLDRPAGLEDCTRAINNGNPVPYSDHGLDRNNNPQSELAAAHGDSESPRHFIPADYLESTEEFIRRRHDDKEKLLADQRRLKREQEEADIAARRHTGVIPTHHQFITNERFGDLLNIDDTAKRKSGLEMRPARAKFDFKAQTLKELPLQKGDVVYIYRQIDQNWYEGEHHGRVGIFPRTYIELLPPAEKAQPRKLAPVQVLEYGEAIAKFNFNGDTQVEMSFRKGERITLLRQVDENWYEGRIPGTSRQGIFPITYVDVLKRPLVKTPVDYIDLPYSSSPSRSATVSPQQPQAQQRRVTPDRSQPSLDLCSYQALYSYVPQNDDELELRDGDIVDVMEKCDDGWFVGTSRRTRQFGTFPGNYVKPLYL</sequence>